<accession>Q06B79</accession>
<dbReference type="EMBL" id="DQ915442">
    <property type="protein sequence ID" value="ABI95143.1"/>
    <property type="molecule type" value="mRNA"/>
</dbReference>
<dbReference type="EMBL" id="EU870374">
    <property type="protein sequence ID" value="ACF75107.1"/>
    <property type="molecule type" value="mRNA"/>
</dbReference>
<dbReference type="GO" id="GO:0005576">
    <property type="term" value="C:extracellular region"/>
    <property type="evidence" value="ECO:0000250"/>
    <property type="project" value="UniProtKB"/>
</dbReference>
<dbReference type="GO" id="GO:0050829">
    <property type="term" value="P:defense response to Gram-negative bacterium"/>
    <property type="evidence" value="ECO:0000250"/>
    <property type="project" value="UniProtKB"/>
</dbReference>
<dbReference type="GO" id="GO:0050830">
    <property type="term" value="P:defense response to Gram-positive bacterium"/>
    <property type="evidence" value="ECO:0000250"/>
    <property type="project" value="UniProtKB"/>
</dbReference>
<dbReference type="GO" id="GO:0044179">
    <property type="term" value="P:hemolysis in another organism"/>
    <property type="evidence" value="ECO:0000250"/>
    <property type="project" value="UniProtKB"/>
</dbReference>
<dbReference type="InterPro" id="IPR004275">
    <property type="entry name" value="Frog_antimicrobial_propeptide"/>
</dbReference>
<dbReference type="Pfam" id="PF03032">
    <property type="entry name" value="FSAP_sig_propep"/>
    <property type="match status" value="1"/>
</dbReference>
<protein>
    <recommendedName>
        <fullName evidence="4 6">Brevinin-1CDYc</fullName>
    </recommendedName>
</protein>
<reference evidence="6" key="1">
    <citation type="journal article" date="2009" name="Comp. Biochem. Physiol.">
        <title>Characterization of antimicrobial peptides isolated from the skin of the Chinese frog, Rana dybowskii.</title>
        <authorList>
            <person name="Jin L.-L."/>
            <person name="Li Q."/>
            <person name="Song S.-S."/>
            <person name="Feng K."/>
            <person name="Zhang D.-B."/>
            <person name="Wang Q.-Y."/>
            <person name="Chen Y.-H."/>
        </authorList>
    </citation>
    <scope>NUCLEOTIDE SEQUENCE [MRNA]</scope>
    <scope>TISSUE SPECIFICITY</scope>
    <source>
        <tissue evidence="5">Skin</tissue>
    </source>
</reference>
<comment type="function">
    <text evidence="1">Antimicrobial peptide.</text>
</comment>
<comment type="subcellular location">
    <subcellularLocation>
        <location evidence="1">Secreted</location>
    </subcellularLocation>
</comment>
<comment type="tissue specificity">
    <text evidence="3">Expressed by the skin glands.</text>
</comment>
<comment type="similarity">
    <text evidence="2">Belongs to the frog skin active peptide (FSAP) family. Brevinin subfamily.</text>
</comment>
<name>BR1C_RANHA</name>
<proteinExistence type="evidence at transcript level"/>
<feature type="signal peptide" evidence="2 5">
    <location>
        <begin position="1"/>
        <end position="22"/>
    </location>
</feature>
<feature type="propeptide" id="PRO_0000391426" evidence="1">
    <location>
        <begin position="23"/>
        <end position="45"/>
    </location>
</feature>
<feature type="peptide" id="PRO_5000148865" description="Brevinin-1CDYc" evidence="3">
    <location>
        <begin position="48"/>
        <end position="67"/>
    </location>
</feature>
<feature type="disulfide bond" evidence="1">
    <location>
        <begin position="61"/>
        <end position="67"/>
    </location>
</feature>
<organism>
    <name type="scientific">Rana huanrensis</name>
    <name type="common">Huanren frog</name>
    <name type="synonym">Korean brown frog</name>
    <dbReference type="NCBI Taxonomy" id="113383"/>
    <lineage>
        <taxon>Eukaryota</taxon>
        <taxon>Metazoa</taxon>
        <taxon>Chordata</taxon>
        <taxon>Craniata</taxon>
        <taxon>Vertebrata</taxon>
        <taxon>Euteleostomi</taxon>
        <taxon>Amphibia</taxon>
        <taxon>Batrachia</taxon>
        <taxon>Anura</taxon>
        <taxon>Neobatrachia</taxon>
        <taxon>Ranoidea</taxon>
        <taxon>Ranidae</taxon>
        <taxon>Rana</taxon>
        <taxon>Rana</taxon>
    </lineage>
</organism>
<sequence>MFTLKKSLLLIFFLGTINLSLCEEERNADEEERRDDPEERDVEVEKRFLSLALAALPKFLCLVFKKC</sequence>
<evidence type="ECO:0000250" key="1">
    <source>
        <dbReference type="UniProtKB" id="P32412"/>
    </source>
</evidence>
<evidence type="ECO:0000255" key="2"/>
<evidence type="ECO:0000269" key="3">
    <source>
    </source>
</evidence>
<evidence type="ECO:0000303" key="4">
    <source>
    </source>
</evidence>
<evidence type="ECO:0000312" key="5">
    <source>
        <dbReference type="EMBL" id="ABI95143.1"/>
    </source>
</evidence>
<evidence type="ECO:0000312" key="6">
    <source>
        <dbReference type="EMBL" id="ACF75107.1"/>
    </source>
</evidence>
<keyword id="KW-0878">Amphibian defense peptide</keyword>
<keyword id="KW-0044">Antibiotic</keyword>
<keyword id="KW-0929">Antimicrobial</keyword>
<keyword id="KW-0165">Cleavage on pair of basic residues</keyword>
<keyword id="KW-1015">Disulfide bond</keyword>
<keyword id="KW-0964">Secreted</keyword>
<keyword id="KW-0732">Signal</keyword>